<dbReference type="EMBL" id="AE014074">
    <property type="protein sequence ID" value="AAM79107.1"/>
    <property type="molecule type" value="Genomic_DNA"/>
</dbReference>
<dbReference type="RefSeq" id="WP_002985233.1">
    <property type="nucleotide sequence ID" value="NC_004070.1"/>
</dbReference>
<dbReference type="SMR" id="P0CZ96"/>
<dbReference type="KEGG" id="spg:SpyM3_0500"/>
<dbReference type="HOGENOM" id="CLU_084338_1_0_9"/>
<dbReference type="Proteomes" id="UP000000564">
    <property type="component" value="Chromosome"/>
</dbReference>
<dbReference type="GO" id="GO:0005886">
    <property type="term" value="C:plasma membrane"/>
    <property type="evidence" value="ECO:0007669"/>
    <property type="project" value="UniProtKB-SubCell"/>
</dbReference>
<dbReference type="GO" id="GO:0045259">
    <property type="term" value="C:proton-transporting ATP synthase complex"/>
    <property type="evidence" value="ECO:0007669"/>
    <property type="project" value="UniProtKB-KW"/>
</dbReference>
<dbReference type="GO" id="GO:0005524">
    <property type="term" value="F:ATP binding"/>
    <property type="evidence" value="ECO:0007669"/>
    <property type="project" value="UniProtKB-UniRule"/>
</dbReference>
<dbReference type="GO" id="GO:0046933">
    <property type="term" value="F:proton-transporting ATP synthase activity, rotational mechanism"/>
    <property type="evidence" value="ECO:0007669"/>
    <property type="project" value="UniProtKB-UniRule"/>
</dbReference>
<dbReference type="CDD" id="cd12152">
    <property type="entry name" value="F1-ATPase_delta"/>
    <property type="match status" value="1"/>
</dbReference>
<dbReference type="Gene3D" id="1.20.5.440">
    <property type="entry name" value="ATP synthase delta/epsilon subunit, C-terminal domain"/>
    <property type="match status" value="1"/>
</dbReference>
<dbReference type="Gene3D" id="2.60.15.10">
    <property type="entry name" value="F0F1 ATP synthase delta/epsilon subunit, N-terminal"/>
    <property type="match status" value="1"/>
</dbReference>
<dbReference type="HAMAP" id="MF_00530">
    <property type="entry name" value="ATP_synth_epsil_bac"/>
    <property type="match status" value="1"/>
</dbReference>
<dbReference type="InterPro" id="IPR001469">
    <property type="entry name" value="ATP_synth_F1_dsu/esu"/>
</dbReference>
<dbReference type="InterPro" id="IPR020546">
    <property type="entry name" value="ATP_synth_F1_dsu/esu_N"/>
</dbReference>
<dbReference type="InterPro" id="IPR020547">
    <property type="entry name" value="ATP_synth_F1_esu_C"/>
</dbReference>
<dbReference type="InterPro" id="IPR036771">
    <property type="entry name" value="ATPsynth_dsu/esu_N"/>
</dbReference>
<dbReference type="NCBIfam" id="TIGR01216">
    <property type="entry name" value="ATP_synt_epsi"/>
    <property type="match status" value="1"/>
</dbReference>
<dbReference type="NCBIfam" id="NF001846">
    <property type="entry name" value="PRK00571.1-3"/>
    <property type="match status" value="1"/>
</dbReference>
<dbReference type="PANTHER" id="PTHR13822">
    <property type="entry name" value="ATP SYNTHASE DELTA/EPSILON CHAIN"/>
    <property type="match status" value="1"/>
</dbReference>
<dbReference type="PANTHER" id="PTHR13822:SF10">
    <property type="entry name" value="ATP SYNTHASE EPSILON CHAIN, CHLOROPLASTIC"/>
    <property type="match status" value="1"/>
</dbReference>
<dbReference type="Pfam" id="PF00401">
    <property type="entry name" value="ATP-synt_DE"/>
    <property type="match status" value="1"/>
</dbReference>
<dbReference type="Pfam" id="PF02823">
    <property type="entry name" value="ATP-synt_DE_N"/>
    <property type="match status" value="1"/>
</dbReference>
<dbReference type="SUPFAM" id="SSF51344">
    <property type="entry name" value="Epsilon subunit of F1F0-ATP synthase N-terminal domain"/>
    <property type="match status" value="1"/>
</dbReference>
<comment type="function">
    <text evidence="1">Produces ATP from ADP in the presence of a proton gradient across the membrane.</text>
</comment>
<comment type="subunit">
    <text evidence="1">F-type ATPases have 2 components, CF(1) - the catalytic core - and CF(0) - the membrane proton channel. CF(1) has five subunits: alpha(3), beta(3), gamma(1), delta(1), epsilon(1). CF(0) has three main subunits: a, b and c.</text>
</comment>
<comment type="subcellular location">
    <subcellularLocation>
        <location evidence="1">Cell membrane</location>
        <topology evidence="1">Peripheral membrane protein</topology>
    </subcellularLocation>
</comment>
<comment type="similarity">
    <text evidence="1">Belongs to the ATPase epsilon chain family.</text>
</comment>
<accession>P0CZ96</accession>
<accession>P63669</accession>
<accession>Q8P1K4</accession>
<feature type="chain" id="PRO_0000188220" description="ATP synthase epsilon chain">
    <location>
        <begin position="1"/>
        <end position="138"/>
    </location>
</feature>
<name>ATPE_STRP3</name>
<organism>
    <name type="scientific">Streptococcus pyogenes serotype M3 (strain ATCC BAA-595 / MGAS315)</name>
    <dbReference type="NCBI Taxonomy" id="198466"/>
    <lineage>
        <taxon>Bacteria</taxon>
        <taxon>Bacillati</taxon>
        <taxon>Bacillota</taxon>
        <taxon>Bacilli</taxon>
        <taxon>Lactobacillales</taxon>
        <taxon>Streptococcaceae</taxon>
        <taxon>Streptococcus</taxon>
    </lineage>
</organism>
<evidence type="ECO:0000255" key="1">
    <source>
        <dbReference type="HAMAP-Rule" id="MF_00530"/>
    </source>
</evidence>
<sequence length="138" mass="15496">MTQMTVQVVTPDGIKYDHHAKCISVTTPDGEMGILPNHINLIAPLQVHEMKIRRGGEDEKVDWIAINGGIIEIKDNVVTVVADSAERDRDIDVSRAERAKLRAEREIAQAETTHNIDEVRRAKVALRRALNRINVSKK</sequence>
<reference key="1">
    <citation type="journal article" date="2002" name="Proc. Natl. Acad. Sci. U.S.A.">
        <title>Genome sequence of a serotype M3 strain of group A Streptococcus: phage-encoded toxins, the high-virulence phenotype, and clone emergence.</title>
        <authorList>
            <person name="Beres S.B."/>
            <person name="Sylva G.L."/>
            <person name="Barbian K.D."/>
            <person name="Lei B."/>
            <person name="Hoff J.S."/>
            <person name="Mammarella N.D."/>
            <person name="Liu M.-Y."/>
            <person name="Smoot J.C."/>
            <person name="Porcella S.F."/>
            <person name="Parkins L.D."/>
            <person name="Campbell D.S."/>
            <person name="Smith T.M."/>
            <person name="McCormick J.K."/>
            <person name="Leung D.Y.M."/>
            <person name="Schlievert P.M."/>
            <person name="Musser J.M."/>
        </authorList>
    </citation>
    <scope>NUCLEOTIDE SEQUENCE [LARGE SCALE GENOMIC DNA]</scope>
    <source>
        <strain>ATCC BAA-595 / MGAS315</strain>
    </source>
</reference>
<proteinExistence type="inferred from homology"/>
<protein>
    <recommendedName>
        <fullName evidence="1">ATP synthase epsilon chain</fullName>
    </recommendedName>
    <alternativeName>
        <fullName evidence="1">ATP synthase F1 sector epsilon subunit</fullName>
    </alternativeName>
    <alternativeName>
        <fullName evidence="1">F-ATPase epsilon subunit</fullName>
    </alternativeName>
</protein>
<gene>
    <name evidence="1" type="primary">atpC</name>
    <name type="synonym">atpE</name>
    <name type="ordered locus">SpyM3_0500</name>
</gene>
<keyword id="KW-0066">ATP synthesis</keyword>
<keyword id="KW-1003">Cell membrane</keyword>
<keyword id="KW-0139">CF(1)</keyword>
<keyword id="KW-0375">Hydrogen ion transport</keyword>
<keyword id="KW-0406">Ion transport</keyword>
<keyword id="KW-0472">Membrane</keyword>
<keyword id="KW-0813">Transport</keyword>